<feature type="chain" id="PRO_1000204720" description="Small ribosomal subunit protein bS18">
    <location>
        <begin position="1"/>
        <end position="78"/>
    </location>
</feature>
<reference key="1">
    <citation type="journal article" date="2009" name="Stand. Genomic Sci.">
        <title>Complete genome sequence of Beutenbergia cavernae type strain (HKI 0122).</title>
        <authorList>
            <person name="Land M."/>
            <person name="Pukall R."/>
            <person name="Abt B."/>
            <person name="Goker M."/>
            <person name="Rohde M."/>
            <person name="Glavina Del Rio T."/>
            <person name="Tice H."/>
            <person name="Copeland A."/>
            <person name="Cheng J.F."/>
            <person name="Lucas S."/>
            <person name="Chen F."/>
            <person name="Nolan M."/>
            <person name="Bruce D."/>
            <person name="Goodwin L."/>
            <person name="Pitluck S."/>
            <person name="Ivanova N."/>
            <person name="Mavromatis K."/>
            <person name="Ovchinnikova G."/>
            <person name="Pati A."/>
            <person name="Chen A."/>
            <person name="Palaniappan K."/>
            <person name="Hauser L."/>
            <person name="Chang Y.J."/>
            <person name="Jefferies C.C."/>
            <person name="Saunders E."/>
            <person name="Brettin T."/>
            <person name="Detter J.C."/>
            <person name="Han C."/>
            <person name="Chain P."/>
            <person name="Bristow J."/>
            <person name="Eisen J.A."/>
            <person name="Markowitz V."/>
            <person name="Hugenholtz P."/>
            <person name="Kyrpides N.C."/>
            <person name="Klenk H.P."/>
            <person name="Lapidus A."/>
        </authorList>
    </citation>
    <scope>NUCLEOTIDE SEQUENCE [LARGE SCALE GENOMIC DNA]</scope>
    <source>
        <strain>ATCC BAA-8 / DSM 12333 / CCUG 43141 / JCM 11478 / NBRC 16432 / NCIMB 13614 / HKI 0122</strain>
    </source>
</reference>
<sequence>MAKPVLRKPKKKSNPLKSAKIEAIDYKDTVLLRKFISDRGKIRARRVTGVSVQEQRAIAKAVKNAREMALLPYSSSAR</sequence>
<proteinExistence type="inferred from homology"/>
<gene>
    <name evidence="1" type="primary">rpsR</name>
    <name type="ordered locus">Bcav_4179</name>
</gene>
<evidence type="ECO:0000255" key="1">
    <source>
        <dbReference type="HAMAP-Rule" id="MF_00270"/>
    </source>
</evidence>
<evidence type="ECO:0000305" key="2"/>
<dbReference type="EMBL" id="CP001618">
    <property type="protein sequence ID" value="ACQ82417.1"/>
    <property type="molecule type" value="Genomic_DNA"/>
</dbReference>
<dbReference type="RefSeq" id="WP_015884654.1">
    <property type="nucleotide sequence ID" value="NC_012669.1"/>
</dbReference>
<dbReference type="SMR" id="C5C659"/>
<dbReference type="STRING" id="471853.Bcav_4179"/>
<dbReference type="KEGG" id="bcv:Bcav_4179"/>
<dbReference type="eggNOG" id="COG0238">
    <property type="taxonomic scope" value="Bacteria"/>
</dbReference>
<dbReference type="HOGENOM" id="CLU_148710_1_0_11"/>
<dbReference type="OrthoDB" id="9812008at2"/>
<dbReference type="Proteomes" id="UP000007962">
    <property type="component" value="Chromosome"/>
</dbReference>
<dbReference type="GO" id="GO:0022627">
    <property type="term" value="C:cytosolic small ribosomal subunit"/>
    <property type="evidence" value="ECO:0007669"/>
    <property type="project" value="TreeGrafter"/>
</dbReference>
<dbReference type="GO" id="GO:0070181">
    <property type="term" value="F:small ribosomal subunit rRNA binding"/>
    <property type="evidence" value="ECO:0007669"/>
    <property type="project" value="TreeGrafter"/>
</dbReference>
<dbReference type="GO" id="GO:0003735">
    <property type="term" value="F:structural constituent of ribosome"/>
    <property type="evidence" value="ECO:0007669"/>
    <property type="project" value="InterPro"/>
</dbReference>
<dbReference type="GO" id="GO:0006412">
    <property type="term" value="P:translation"/>
    <property type="evidence" value="ECO:0007669"/>
    <property type="project" value="UniProtKB-UniRule"/>
</dbReference>
<dbReference type="Gene3D" id="4.10.640.10">
    <property type="entry name" value="Ribosomal protein S18"/>
    <property type="match status" value="1"/>
</dbReference>
<dbReference type="HAMAP" id="MF_00270">
    <property type="entry name" value="Ribosomal_bS18"/>
    <property type="match status" value="1"/>
</dbReference>
<dbReference type="InterPro" id="IPR001648">
    <property type="entry name" value="Ribosomal_bS18"/>
</dbReference>
<dbReference type="InterPro" id="IPR018275">
    <property type="entry name" value="Ribosomal_bS18_CS"/>
</dbReference>
<dbReference type="InterPro" id="IPR036870">
    <property type="entry name" value="Ribosomal_bS18_sf"/>
</dbReference>
<dbReference type="NCBIfam" id="TIGR00165">
    <property type="entry name" value="S18"/>
    <property type="match status" value="1"/>
</dbReference>
<dbReference type="PANTHER" id="PTHR13479">
    <property type="entry name" value="30S RIBOSOMAL PROTEIN S18"/>
    <property type="match status" value="1"/>
</dbReference>
<dbReference type="PANTHER" id="PTHR13479:SF40">
    <property type="entry name" value="SMALL RIBOSOMAL SUBUNIT PROTEIN BS18M"/>
    <property type="match status" value="1"/>
</dbReference>
<dbReference type="Pfam" id="PF01084">
    <property type="entry name" value="Ribosomal_S18"/>
    <property type="match status" value="1"/>
</dbReference>
<dbReference type="PRINTS" id="PR00974">
    <property type="entry name" value="RIBOSOMALS18"/>
</dbReference>
<dbReference type="SUPFAM" id="SSF46911">
    <property type="entry name" value="Ribosomal protein S18"/>
    <property type="match status" value="1"/>
</dbReference>
<dbReference type="PROSITE" id="PS00057">
    <property type="entry name" value="RIBOSOMAL_S18"/>
    <property type="match status" value="1"/>
</dbReference>
<comment type="function">
    <text evidence="1">Binds as a heterodimer with protein bS6 to the central domain of the 16S rRNA, where it helps stabilize the platform of the 30S subunit.</text>
</comment>
<comment type="subunit">
    <text evidence="1">Part of the 30S ribosomal subunit. Forms a tight heterodimer with protein bS6.</text>
</comment>
<comment type="similarity">
    <text evidence="1">Belongs to the bacterial ribosomal protein bS18 family.</text>
</comment>
<protein>
    <recommendedName>
        <fullName evidence="1">Small ribosomal subunit protein bS18</fullName>
    </recommendedName>
    <alternativeName>
        <fullName evidence="2">30S ribosomal protein S18</fullName>
    </alternativeName>
</protein>
<organism>
    <name type="scientific">Beutenbergia cavernae (strain ATCC BAA-8 / DSM 12333 / CCUG 43141 / JCM 11478 / NBRC 16432 / NCIMB 13614 / HKI 0122)</name>
    <dbReference type="NCBI Taxonomy" id="471853"/>
    <lineage>
        <taxon>Bacteria</taxon>
        <taxon>Bacillati</taxon>
        <taxon>Actinomycetota</taxon>
        <taxon>Actinomycetes</taxon>
        <taxon>Micrococcales</taxon>
        <taxon>Beutenbergiaceae</taxon>
        <taxon>Beutenbergia</taxon>
    </lineage>
</organism>
<name>RS18_BEUC1</name>
<keyword id="KW-1185">Reference proteome</keyword>
<keyword id="KW-0687">Ribonucleoprotein</keyword>
<keyword id="KW-0689">Ribosomal protein</keyword>
<keyword id="KW-0694">RNA-binding</keyword>
<keyword id="KW-0699">rRNA-binding</keyword>
<accession>C5C659</accession>